<evidence type="ECO:0000250" key="1"/>
<evidence type="ECO:0000255" key="2">
    <source>
        <dbReference type="HAMAP-Rule" id="MF_01217"/>
    </source>
</evidence>
<evidence type="ECO:0000255" key="3">
    <source>
        <dbReference type="PROSITE-ProRule" id="PRU00258"/>
    </source>
</evidence>
<comment type="function">
    <text evidence="2">Carrier of the growing fatty acid chain in fatty acid biosynthesis.</text>
</comment>
<comment type="pathway">
    <text evidence="2">Lipid metabolism; fatty acid biosynthesis.</text>
</comment>
<comment type="subcellular location">
    <subcellularLocation>
        <location evidence="2">Cytoplasm</location>
    </subcellularLocation>
</comment>
<comment type="PTM">
    <text evidence="2">4'-phosphopantetheine is transferred from CoA to a specific serine of apo-ACP by AcpS. This modification is essential for activity because fatty acids are bound in thioester linkage to the sulfhydryl of the prosthetic group.</text>
</comment>
<comment type="similarity">
    <text evidence="2">Belongs to the acyl carrier protein (ACP) family.</text>
</comment>
<dbReference type="EMBL" id="AE005174">
    <property type="protein sequence ID" value="AAG55840.1"/>
    <property type="molecule type" value="Genomic_DNA"/>
</dbReference>
<dbReference type="EMBL" id="BA000007">
    <property type="protein sequence ID" value="BAB34895.1"/>
    <property type="molecule type" value="Genomic_DNA"/>
</dbReference>
<dbReference type="PIR" id="D85672">
    <property type="entry name" value="D85672"/>
</dbReference>
<dbReference type="PIR" id="H90812">
    <property type="entry name" value="H90812"/>
</dbReference>
<dbReference type="RefSeq" id="NP_309499.1">
    <property type="nucleotide sequence ID" value="NC_002695.1"/>
</dbReference>
<dbReference type="RefSeq" id="WP_000103754.1">
    <property type="nucleotide sequence ID" value="NZ_VOAI01000018.1"/>
</dbReference>
<dbReference type="SMR" id="P0A6B0"/>
<dbReference type="STRING" id="155864.Z1733"/>
<dbReference type="GeneID" id="912360"/>
<dbReference type="GeneID" id="98387866"/>
<dbReference type="KEGG" id="ece:Z1733"/>
<dbReference type="KEGG" id="ecs:ECs_1472"/>
<dbReference type="PATRIC" id="fig|386585.9.peg.1572"/>
<dbReference type="eggNOG" id="COG0236">
    <property type="taxonomic scope" value="Bacteria"/>
</dbReference>
<dbReference type="HOGENOM" id="CLU_108696_5_1_6"/>
<dbReference type="OMA" id="TMEASFI"/>
<dbReference type="UniPathway" id="UPA00094"/>
<dbReference type="Proteomes" id="UP000000558">
    <property type="component" value="Chromosome"/>
</dbReference>
<dbReference type="Proteomes" id="UP000002519">
    <property type="component" value="Chromosome"/>
</dbReference>
<dbReference type="GO" id="GO:0005829">
    <property type="term" value="C:cytosol"/>
    <property type="evidence" value="ECO:0007669"/>
    <property type="project" value="TreeGrafter"/>
</dbReference>
<dbReference type="GO" id="GO:0016020">
    <property type="term" value="C:membrane"/>
    <property type="evidence" value="ECO:0007669"/>
    <property type="project" value="GOC"/>
</dbReference>
<dbReference type="GO" id="GO:0000035">
    <property type="term" value="F:acyl binding"/>
    <property type="evidence" value="ECO:0007669"/>
    <property type="project" value="TreeGrafter"/>
</dbReference>
<dbReference type="GO" id="GO:0000036">
    <property type="term" value="F:acyl carrier activity"/>
    <property type="evidence" value="ECO:0007669"/>
    <property type="project" value="UniProtKB-UniRule"/>
</dbReference>
<dbReference type="GO" id="GO:0009245">
    <property type="term" value="P:lipid A biosynthetic process"/>
    <property type="evidence" value="ECO:0007669"/>
    <property type="project" value="TreeGrafter"/>
</dbReference>
<dbReference type="FunFam" id="1.10.1200.10:FF:000001">
    <property type="entry name" value="Acyl carrier protein"/>
    <property type="match status" value="1"/>
</dbReference>
<dbReference type="Gene3D" id="1.10.1200.10">
    <property type="entry name" value="ACP-like"/>
    <property type="match status" value="1"/>
</dbReference>
<dbReference type="HAMAP" id="MF_01217">
    <property type="entry name" value="Acyl_carrier"/>
    <property type="match status" value="1"/>
</dbReference>
<dbReference type="InterPro" id="IPR003231">
    <property type="entry name" value="ACP"/>
</dbReference>
<dbReference type="InterPro" id="IPR036736">
    <property type="entry name" value="ACP-like_sf"/>
</dbReference>
<dbReference type="InterPro" id="IPR009081">
    <property type="entry name" value="PP-bd_ACP"/>
</dbReference>
<dbReference type="InterPro" id="IPR006162">
    <property type="entry name" value="Ppantetheine_attach_site"/>
</dbReference>
<dbReference type="NCBIfam" id="TIGR00517">
    <property type="entry name" value="acyl_carrier"/>
    <property type="match status" value="1"/>
</dbReference>
<dbReference type="NCBIfam" id="NF002148">
    <property type="entry name" value="PRK00982.1-2"/>
    <property type="match status" value="1"/>
</dbReference>
<dbReference type="NCBIfam" id="NF002149">
    <property type="entry name" value="PRK00982.1-3"/>
    <property type="match status" value="1"/>
</dbReference>
<dbReference type="NCBIfam" id="NF002150">
    <property type="entry name" value="PRK00982.1-4"/>
    <property type="match status" value="1"/>
</dbReference>
<dbReference type="NCBIfam" id="NF002151">
    <property type="entry name" value="PRK00982.1-5"/>
    <property type="match status" value="1"/>
</dbReference>
<dbReference type="PANTHER" id="PTHR20863">
    <property type="entry name" value="ACYL CARRIER PROTEIN"/>
    <property type="match status" value="1"/>
</dbReference>
<dbReference type="PANTHER" id="PTHR20863:SF76">
    <property type="entry name" value="CARRIER DOMAIN-CONTAINING PROTEIN"/>
    <property type="match status" value="1"/>
</dbReference>
<dbReference type="Pfam" id="PF00550">
    <property type="entry name" value="PP-binding"/>
    <property type="match status" value="1"/>
</dbReference>
<dbReference type="SUPFAM" id="SSF47336">
    <property type="entry name" value="ACP-like"/>
    <property type="match status" value="1"/>
</dbReference>
<dbReference type="PROSITE" id="PS50075">
    <property type="entry name" value="CARRIER"/>
    <property type="match status" value="1"/>
</dbReference>
<dbReference type="PROSITE" id="PS00012">
    <property type="entry name" value="PHOSPHOPANTETHEINE"/>
    <property type="match status" value="1"/>
</dbReference>
<reference key="1">
    <citation type="journal article" date="2001" name="Nature">
        <title>Genome sequence of enterohaemorrhagic Escherichia coli O157:H7.</title>
        <authorList>
            <person name="Perna N.T."/>
            <person name="Plunkett G. III"/>
            <person name="Burland V."/>
            <person name="Mau B."/>
            <person name="Glasner J.D."/>
            <person name="Rose D.J."/>
            <person name="Mayhew G.F."/>
            <person name="Evans P.S."/>
            <person name="Gregor J."/>
            <person name="Kirkpatrick H.A."/>
            <person name="Posfai G."/>
            <person name="Hackett J."/>
            <person name="Klink S."/>
            <person name="Boutin A."/>
            <person name="Shao Y."/>
            <person name="Miller L."/>
            <person name="Grotbeck E.J."/>
            <person name="Davis N.W."/>
            <person name="Lim A."/>
            <person name="Dimalanta E.T."/>
            <person name="Potamousis K."/>
            <person name="Apodaca J."/>
            <person name="Anantharaman T.S."/>
            <person name="Lin J."/>
            <person name="Yen G."/>
            <person name="Schwartz D.C."/>
            <person name="Welch R.A."/>
            <person name="Blattner F.R."/>
        </authorList>
    </citation>
    <scope>NUCLEOTIDE SEQUENCE [LARGE SCALE GENOMIC DNA]</scope>
    <source>
        <strain>O157:H7 / EDL933 / ATCC 700927 / EHEC</strain>
    </source>
</reference>
<reference key="2">
    <citation type="journal article" date="2001" name="DNA Res.">
        <title>Complete genome sequence of enterohemorrhagic Escherichia coli O157:H7 and genomic comparison with a laboratory strain K-12.</title>
        <authorList>
            <person name="Hayashi T."/>
            <person name="Makino K."/>
            <person name="Ohnishi M."/>
            <person name="Kurokawa K."/>
            <person name="Ishii K."/>
            <person name="Yokoyama K."/>
            <person name="Han C.-G."/>
            <person name="Ohtsubo E."/>
            <person name="Nakayama K."/>
            <person name="Murata T."/>
            <person name="Tanaka M."/>
            <person name="Tobe T."/>
            <person name="Iida T."/>
            <person name="Takami H."/>
            <person name="Honda T."/>
            <person name="Sasakawa C."/>
            <person name="Ogasawara N."/>
            <person name="Yasunaga T."/>
            <person name="Kuhara S."/>
            <person name="Shiba T."/>
            <person name="Hattori M."/>
            <person name="Shinagawa H."/>
        </authorList>
    </citation>
    <scope>NUCLEOTIDE SEQUENCE [LARGE SCALE GENOMIC DNA]</scope>
    <source>
        <strain>O157:H7 / Sakai / RIMD 0509952 / EHEC</strain>
    </source>
</reference>
<name>ACP_ECO57</name>
<protein>
    <recommendedName>
        <fullName evidence="2">Acyl carrier protein</fullName>
        <shortName evidence="2">ACP</shortName>
    </recommendedName>
    <alternativeName>
        <fullName>Cytosolic-activating factor</fullName>
        <shortName>CAF</shortName>
    </alternativeName>
    <alternativeName>
        <fullName>Fatty acid synthase acyl carrier protein</fullName>
    </alternativeName>
</protein>
<sequence length="78" mass="8640">MSTIEERVKKIIGEQLGVKQEEVTNNASFVEDLGADSLDTVELVMALEEEFDTEIPDEEAEKITTVQAAIDYINGHQA</sequence>
<gene>
    <name evidence="2" type="primary">acpP</name>
    <name type="ordered locus">Z1733</name>
    <name type="ordered locus">ECs1472</name>
</gene>
<feature type="initiator methionine" description="Removed" evidence="1">
    <location>
        <position position="1"/>
    </location>
</feature>
<feature type="chain" id="PRO_0000180135" description="Acyl carrier protein">
    <location>
        <begin position="2"/>
        <end position="78"/>
    </location>
</feature>
<feature type="domain" description="Carrier" evidence="3">
    <location>
        <begin position="2"/>
        <end position="77"/>
    </location>
</feature>
<feature type="modified residue" description="O-(pantetheine 4'-phosphoryl)serine" evidence="3">
    <location>
        <position position="37"/>
    </location>
</feature>
<accession>P0A6B0</accession>
<accession>P02901</accession>
<accession>Q53352</accession>
<keyword id="KW-0963">Cytoplasm</keyword>
<keyword id="KW-0275">Fatty acid biosynthesis</keyword>
<keyword id="KW-0276">Fatty acid metabolism</keyword>
<keyword id="KW-0444">Lipid biosynthesis</keyword>
<keyword id="KW-0443">Lipid metabolism</keyword>
<keyword id="KW-0596">Phosphopantetheine</keyword>
<keyword id="KW-0597">Phosphoprotein</keyword>
<keyword id="KW-1185">Reference proteome</keyword>
<proteinExistence type="inferred from homology"/>
<organism>
    <name type="scientific">Escherichia coli O157:H7</name>
    <dbReference type="NCBI Taxonomy" id="83334"/>
    <lineage>
        <taxon>Bacteria</taxon>
        <taxon>Pseudomonadati</taxon>
        <taxon>Pseudomonadota</taxon>
        <taxon>Gammaproteobacteria</taxon>
        <taxon>Enterobacterales</taxon>
        <taxon>Enterobacteriaceae</taxon>
        <taxon>Escherichia</taxon>
    </lineage>
</organism>